<comment type="function">
    <text evidence="11">Downstream effector of Rap required for cell adhesion and migration of neural crest precursors during development.</text>
</comment>
<comment type="subunit">
    <text evidence="11 13">Interacts with RAP1A; in a GTP-dependent manner. Does not interact with members of the Ras family (PubMed:17704304). Interacts (via PDZ domain) with KIF14; is recruited to the microtubule network restricting its interaction with activated RAP1A (PubMed:23209302).</text>
</comment>
<comment type="interaction">
    <interactant intactId="EBI-744267">
        <id>Q96JH8</id>
    </interactant>
    <interactant intactId="EBI-1220105">
        <id>P02654</id>
        <label>APOC1</label>
    </interactant>
    <organismsDiffer>false</organismsDiffer>
    <experiments>3</experiments>
</comment>
<comment type="interaction">
    <interactant intactId="EBI-744267">
        <id>Q96JH8</id>
    </interactant>
    <interactant intactId="EBI-742887">
        <id>Q8TAP6</id>
        <label>CEP76</label>
    </interactant>
    <organismsDiffer>false</organismsDiffer>
    <experiments>3</experiments>
</comment>
<comment type="interaction">
    <interactant intactId="EBI-744267">
        <id>Q96JH8</id>
    </interactant>
    <interactant intactId="EBI-3909284">
        <id>P15976</id>
        <label>GATA1</label>
    </interactant>
    <organismsDiffer>false</organismsDiffer>
    <experiments>3</experiments>
</comment>
<comment type="interaction">
    <interactant intactId="EBI-744267">
        <id>Q96JH8</id>
    </interactant>
    <interactant intactId="EBI-948001">
        <id>Q15323</id>
        <label>KRT31</label>
    </interactant>
    <organismsDiffer>false</organismsDiffer>
    <experiments>6</experiments>
</comment>
<comment type="interaction">
    <interactant intactId="EBI-744267">
        <id>Q96JH8</id>
    </interactant>
    <interactant intactId="EBI-10178634">
        <id>P43364-2</id>
        <label>MAGEA11</label>
    </interactant>
    <organismsDiffer>false</organismsDiffer>
    <experiments>3</experiments>
</comment>
<comment type="interaction">
    <interactant intactId="EBI-744267">
        <id>Q96JH8</id>
    </interactant>
    <interactant intactId="EBI-748896">
        <id>Q96HT8</id>
        <label>MRFAP1L1</label>
    </interactant>
    <organismsDiffer>false</organismsDiffer>
    <experiments>3</experiments>
</comment>
<comment type="alternative products">
    <event type="alternative splicing"/>
    <isoform>
        <id>Q96JH8-4</id>
        <name>4</name>
        <sequence type="displayed"/>
    </isoform>
    <isoform>
        <id>Q96JH8-2</id>
        <name>2</name>
        <sequence type="described" ref="VSP_016098"/>
    </isoform>
    <isoform>
        <id>Q96JH8-3</id>
        <name>3</name>
        <sequence type="described" ref="VSP_016097 VSP_016099"/>
    </isoform>
    <isoform>
        <id>Q96JH8-1</id>
        <name>1</name>
        <sequence type="described" ref="VSP_035179"/>
    </isoform>
</comment>
<comment type="similarity">
    <text evidence="18">Belongs to the RADIL family.</text>
</comment>
<comment type="sequence caution" evidence="18">
    <conflict type="erroneous gene model prediction">
        <sequence resource="EMBL-CDS" id="AAS07559"/>
    </conflict>
</comment>
<comment type="sequence caution" evidence="18">
    <conflict type="erroneous initiation">
        <sequence resource="EMBL-CDS" id="BAA91543"/>
    </conflict>
    <text>Truncated N-terminus.</text>
</comment>
<comment type="sequence caution" evidence="18">
    <conflict type="erroneous initiation">
        <sequence resource="EMBL-CDS" id="BAB47478"/>
    </conflict>
    <text>Extended N-terminus.</text>
</comment>
<evidence type="ECO:0000250" key="1">
    <source>
        <dbReference type="UniProtKB" id="Q69Z89"/>
    </source>
</evidence>
<evidence type="ECO:0000255" key="2">
    <source>
        <dbReference type="PROSITE-ProRule" id="PRU00143"/>
    </source>
</evidence>
<evidence type="ECO:0000255" key="3">
    <source>
        <dbReference type="PROSITE-ProRule" id="PRU00166"/>
    </source>
</evidence>
<evidence type="ECO:0000255" key="4">
    <source>
        <dbReference type="PROSITE-ProRule" id="PRU00503"/>
    </source>
</evidence>
<evidence type="ECO:0000256" key="5">
    <source>
        <dbReference type="SAM" id="MobiDB-lite"/>
    </source>
</evidence>
<evidence type="ECO:0000269" key="6">
    <source>
    </source>
</evidence>
<evidence type="ECO:0000269" key="7">
    <source>
    </source>
</evidence>
<evidence type="ECO:0000269" key="8">
    <source>
    </source>
</evidence>
<evidence type="ECO:0000269" key="9">
    <source>
    </source>
</evidence>
<evidence type="ECO:0000269" key="10">
    <source>
    </source>
</evidence>
<evidence type="ECO:0000269" key="11">
    <source>
    </source>
</evidence>
<evidence type="ECO:0000269" key="12">
    <source>
    </source>
</evidence>
<evidence type="ECO:0000269" key="13">
    <source>
    </source>
</evidence>
<evidence type="ECO:0000269" key="14">
    <source ref="6"/>
</evidence>
<evidence type="ECO:0000303" key="15">
    <source>
    </source>
</evidence>
<evidence type="ECO:0000303" key="16">
    <source>
    </source>
</evidence>
<evidence type="ECO:0000303" key="17">
    <source>
    </source>
</evidence>
<evidence type="ECO:0000305" key="18"/>
<evidence type="ECO:0007744" key="19">
    <source>
    </source>
</evidence>
<evidence type="ECO:0007744" key="20">
    <source>
    </source>
</evidence>
<evidence type="ECO:0007829" key="21">
    <source>
        <dbReference type="PDB" id="1UM1"/>
    </source>
</evidence>
<evidence type="ECO:0007829" key="22">
    <source>
        <dbReference type="PDB" id="3EC8"/>
    </source>
</evidence>
<sequence>MFYGTHFIMSPPTKSKLKRQSQLLSSMLSRTLSYKYRDLDSTFSSLGASDDPAELSTQLSAPGVLKVFGDSVCTGTHYKSVLATGTSSARELVKEALERYALDPRQAGQYVLCDVVGQAGDAGQRWQARCFRVFGDSEKPLLIQELWKPREGLSRRFELRKRSDVEELAAKEVDTITAGINAQARRLQRSRAKGTPTPALGDARSSPPPRLRRTVSETSLSPVNALPAAAQGPEEPGPDAMRYSLYQSPHLLLLQGYSQQHDSLVYVLNRDRHTVGQRTPSSKPSISLSAPDILPLHCTIRRQPLPDSGQAAGRLVLEPIPGAHISVNFSEVGHRTVVLHHGDLLSLGLYYLLLFKDPAQAQPLPARALARLRAVPQSCRLCGAALGARGAASPTQAALPRRQQLLLEFEPHLEDTLLQRIMTLIEPGGDDHKLTPAFLLCLCIQHSATHFQPGTFGQLLLKIARLIRETVWEKTKELAEKQAQLQEPISLASCAMADLVPDLQPILFWMSNSIELLYFIQQKCPLYMQSMEEQLDITGSKESLFSCTLTASEEAMAVLEEVVLYAFQQCVYYVSKSLYICLPALLECPPFQTERRESWSSAPELPEELRRVVSVYQAALDLLRQLQVHPEVASQMLAYLFFFSGTLLLNQLLDRGPSLSCFHWPRGVQACARLQQLLEWMRSAGFGAAGEHFFQKLSCTLNLLATPRAQLIQMSWTALRAAFPALSPAQLHRLLTHYQLASAMGPMSTWEPGAQDSPEAFRSEDVLESYENPPPIVLPSDGFQVDLEANCLDDSIYQHLLYVRHFLWGLRSRASPGSPGRPGSGASQPVCPEGMHHVVLDGHLEAPSCPLAPRDPGPAAREVAPERTLPLRGAPWAQAPPGRQPSRGGSQAGPPHTDSSCLLTPPSTPLGPEPGDPDWPESGGPCGKALPERQRNGLSGLRGAAPEGDSAALAEESPPAPSSRSSSTEDFCYVFTVELERGPSGLGMGLIDGMHTHLGAPGLYIQTLLPGSPAAADGRLSLGDRILEVNGSSLLGLGYLRAVDLIRHGGKKMRFLVAKSDVETAKKIHFRTPPL</sequence>
<organism>
    <name type="scientific">Homo sapiens</name>
    <name type="common">Human</name>
    <dbReference type="NCBI Taxonomy" id="9606"/>
    <lineage>
        <taxon>Eukaryota</taxon>
        <taxon>Metazoa</taxon>
        <taxon>Chordata</taxon>
        <taxon>Craniata</taxon>
        <taxon>Vertebrata</taxon>
        <taxon>Euteleostomi</taxon>
        <taxon>Mammalia</taxon>
        <taxon>Eutheria</taxon>
        <taxon>Euarchontoglires</taxon>
        <taxon>Primates</taxon>
        <taxon>Haplorrhini</taxon>
        <taxon>Catarrhini</taxon>
        <taxon>Hominidae</taxon>
        <taxon>Homo</taxon>
    </lineage>
</organism>
<reference key="1">
    <citation type="journal article" date="2001" name="DNA Res.">
        <title>Prediction of the coding sequences of unidentified human genes. XX. The complete sequences of 100 new cDNA clones from brain which code for large proteins in vitro.</title>
        <authorList>
            <person name="Nagase T."/>
            <person name="Nakayama M."/>
            <person name="Nakajima D."/>
            <person name="Kikuno R."/>
            <person name="Ohara O."/>
        </authorList>
    </citation>
    <scope>NUCLEOTIDE SEQUENCE [LARGE SCALE MRNA] (ISOFORM 1)</scope>
    <scope>VARIANTS ASN-239; ASP-412 AND GLY-886</scope>
    <source>
        <tissue>Brain</tissue>
    </source>
</reference>
<reference key="2">
    <citation type="journal article" date="2004" name="Nat. Genet.">
        <title>Complete sequencing and characterization of 21,243 full-length human cDNAs.</title>
        <authorList>
            <person name="Ota T."/>
            <person name="Suzuki Y."/>
            <person name="Nishikawa T."/>
            <person name="Otsuki T."/>
            <person name="Sugiyama T."/>
            <person name="Irie R."/>
            <person name="Wakamatsu A."/>
            <person name="Hayashi K."/>
            <person name="Sato H."/>
            <person name="Nagai K."/>
            <person name="Kimura K."/>
            <person name="Makita H."/>
            <person name="Sekine M."/>
            <person name="Obayashi M."/>
            <person name="Nishi T."/>
            <person name="Shibahara T."/>
            <person name="Tanaka T."/>
            <person name="Ishii S."/>
            <person name="Yamamoto J."/>
            <person name="Saito K."/>
            <person name="Kawai Y."/>
            <person name="Isono Y."/>
            <person name="Nakamura Y."/>
            <person name="Nagahari K."/>
            <person name="Murakami K."/>
            <person name="Yasuda T."/>
            <person name="Iwayanagi T."/>
            <person name="Wagatsuma M."/>
            <person name="Shiratori A."/>
            <person name="Sudo H."/>
            <person name="Hosoiri T."/>
            <person name="Kaku Y."/>
            <person name="Kodaira H."/>
            <person name="Kondo H."/>
            <person name="Sugawara M."/>
            <person name="Takahashi M."/>
            <person name="Kanda K."/>
            <person name="Yokoi T."/>
            <person name="Furuya T."/>
            <person name="Kikkawa E."/>
            <person name="Omura Y."/>
            <person name="Abe K."/>
            <person name="Kamihara K."/>
            <person name="Katsuta N."/>
            <person name="Sato K."/>
            <person name="Tanikawa M."/>
            <person name="Yamazaki M."/>
            <person name="Ninomiya K."/>
            <person name="Ishibashi T."/>
            <person name="Yamashita H."/>
            <person name="Murakawa K."/>
            <person name="Fujimori K."/>
            <person name="Tanai H."/>
            <person name="Kimata M."/>
            <person name="Watanabe M."/>
            <person name="Hiraoka S."/>
            <person name="Chiba Y."/>
            <person name="Ishida S."/>
            <person name="Ono Y."/>
            <person name="Takiguchi S."/>
            <person name="Watanabe S."/>
            <person name="Yosida M."/>
            <person name="Hotuta T."/>
            <person name="Kusano J."/>
            <person name="Kanehori K."/>
            <person name="Takahashi-Fujii A."/>
            <person name="Hara H."/>
            <person name="Tanase T.-O."/>
            <person name="Nomura Y."/>
            <person name="Togiya S."/>
            <person name="Komai F."/>
            <person name="Hara R."/>
            <person name="Takeuchi K."/>
            <person name="Arita M."/>
            <person name="Imose N."/>
            <person name="Musashino K."/>
            <person name="Yuuki H."/>
            <person name="Oshima A."/>
            <person name="Sasaki N."/>
            <person name="Aotsuka S."/>
            <person name="Yoshikawa Y."/>
            <person name="Matsunawa H."/>
            <person name="Ichihara T."/>
            <person name="Shiohata N."/>
            <person name="Sano S."/>
            <person name="Moriya S."/>
            <person name="Momiyama H."/>
            <person name="Satoh N."/>
            <person name="Takami S."/>
            <person name="Terashima Y."/>
            <person name="Suzuki O."/>
            <person name="Nakagawa S."/>
            <person name="Senoh A."/>
            <person name="Mizoguchi H."/>
            <person name="Goto Y."/>
            <person name="Shimizu F."/>
            <person name="Wakebe H."/>
            <person name="Hishigaki H."/>
            <person name="Watanabe T."/>
            <person name="Sugiyama A."/>
            <person name="Takemoto M."/>
            <person name="Kawakami B."/>
            <person name="Yamazaki M."/>
            <person name="Watanabe K."/>
            <person name="Kumagai A."/>
            <person name="Itakura S."/>
            <person name="Fukuzumi Y."/>
            <person name="Fujimori Y."/>
            <person name="Komiyama M."/>
            <person name="Tashiro H."/>
            <person name="Tanigami A."/>
            <person name="Fujiwara T."/>
            <person name="Ono T."/>
            <person name="Yamada K."/>
            <person name="Fujii Y."/>
            <person name="Ozaki K."/>
            <person name="Hirao M."/>
            <person name="Ohmori Y."/>
            <person name="Kawabata A."/>
            <person name="Hikiji T."/>
            <person name="Kobatake N."/>
            <person name="Inagaki H."/>
            <person name="Ikema Y."/>
            <person name="Okamoto S."/>
            <person name="Okitani R."/>
            <person name="Kawakami T."/>
            <person name="Noguchi S."/>
            <person name="Itoh T."/>
            <person name="Shigeta K."/>
            <person name="Senba T."/>
            <person name="Matsumura K."/>
            <person name="Nakajima Y."/>
            <person name="Mizuno T."/>
            <person name="Morinaga M."/>
            <person name="Sasaki M."/>
            <person name="Togashi T."/>
            <person name="Oyama M."/>
            <person name="Hata H."/>
            <person name="Watanabe M."/>
            <person name="Komatsu T."/>
            <person name="Mizushima-Sugano J."/>
            <person name="Satoh T."/>
            <person name="Shirai Y."/>
            <person name="Takahashi Y."/>
            <person name="Nakagawa K."/>
            <person name="Okumura K."/>
            <person name="Nagase T."/>
            <person name="Nomura N."/>
            <person name="Kikuchi H."/>
            <person name="Masuho Y."/>
            <person name="Yamashita R."/>
            <person name="Nakai K."/>
            <person name="Yada T."/>
            <person name="Nakamura Y."/>
            <person name="Ohara O."/>
            <person name="Isogai T."/>
            <person name="Sugano S."/>
        </authorList>
    </citation>
    <scope>NUCLEOTIDE SEQUENCE [LARGE SCALE MRNA] (ISOFORM 2)</scope>
    <scope>NUCLEOTIDE SEQUENCE [LARGE SCALE MRNA] OF 283-1075 (ISOFORM 1)</scope>
    <scope>VARIANTS ASP-412 AND GLY-886</scope>
    <source>
        <tissue>Embryo</tissue>
        <tissue>Teratocarcinoma</tissue>
    </source>
</reference>
<reference key="3">
    <citation type="journal article" date="2007" name="BMC Genomics">
        <title>The full-ORF clone resource of the German cDNA consortium.</title>
        <authorList>
            <person name="Bechtel S."/>
            <person name="Rosenfelder H."/>
            <person name="Duda A."/>
            <person name="Schmidt C.P."/>
            <person name="Ernst U."/>
            <person name="Wellenreuther R."/>
            <person name="Mehrle A."/>
            <person name="Schuster C."/>
            <person name="Bahr A."/>
            <person name="Bloecker H."/>
            <person name="Heubner D."/>
            <person name="Hoerlein A."/>
            <person name="Michel G."/>
            <person name="Wedler H."/>
            <person name="Koehrer K."/>
            <person name="Ottenwaelder B."/>
            <person name="Poustka A."/>
            <person name="Wiemann S."/>
            <person name="Schupp I."/>
        </authorList>
    </citation>
    <scope>NUCLEOTIDE SEQUENCE [LARGE SCALE MRNA] (ISOFORM 4)</scope>
    <scope>VARIANTS ASN-239; ASP-412 AND GLY-886</scope>
    <source>
        <tissue>Testis</tissue>
    </source>
</reference>
<reference key="4">
    <citation type="journal article" date="2003" name="Nature">
        <title>The DNA sequence of human chromosome 7.</title>
        <authorList>
            <person name="Hillier L.W."/>
            <person name="Fulton R.S."/>
            <person name="Fulton L.A."/>
            <person name="Graves T.A."/>
            <person name="Pepin K.H."/>
            <person name="Wagner-McPherson C."/>
            <person name="Layman D."/>
            <person name="Maas J."/>
            <person name="Jaeger S."/>
            <person name="Walker R."/>
            <person name="Wylie K."/>
            <person name="Sekhon M."/>
            <person name="Becker M.C."/>
            <person name="O'Laughlin M.D."/>
            <person name="Schaller M.E."/>
            <person name="Fewell G.A."/>
            <person name="Delehaunty K.D."/>
            <person name="Miner T.L."/>
            <person name="Nash W.E."/>
            <person name="Cordes M."/>
            <person name="Du H."/>
            <person name="Sun H."/>
            <person name="Edwards J."/>
            <person name="Bradshaw-Cordum H."/>
            <person name="Ali J."/>
            <person name="Andrews S."/>
            <person name="Isak A."/>
            <person name="Vanbrunt A."/>
            <person name="Nguyen C."/>
            <person name="Du F."/>
            <person name="Lamar B."/>
            <person name="Courtney L."/>
            <person name="Kalicki J."/>
            <person name="Ozersky P."/>
            <person name="Bielicki L."/>
            <person name="Scott K."/>
            <person name="Holmes A."/>
            <person name="Harkins R."/>
            <person name="Harris A."/>
            <person name="Strong C.M."/>
            <person name="Hou S."/>
            <person name="Tomlinson C."/>
            <person name="Dauphin-Kohlberg S."/>
            <person name="Kozlowicz-Reilly A."/>
            <person name="Leonard S."/>
            <person name="Rohlfing T."/>
            <person name="Rock S.M."/>
            <person name="Tin-Wollam A.-M."/>
            <person name="Abbott A."/>
            <person name="Minx P."/>
            <person name="Maupin R."/>
            <person name="Strowmatt C."/>
            <person name="Latreille P."/>
            <person name="Miller N."/>
            <person name="Johnson D."/>
            <person name="Murray J."/>
            <person name="Woessner J.P."/>
            <person name="Wendl M.C."/>
            <person name="Yang S.-P."/>
            <person name="Schultz B.R."/>
            <person name="Wallis J.W."/>
            <person name="Spieth J."/>
            <person name="Bieri T.A."/>
            <person name="Nelson J.O."/>
            <person name="Berkowicz N."/>
            <person name="Wohldmann P.E."/>
            <person name="Cook L.L."/>
            <person name="Hickenbotham M.T."/>
            <person name="Eldred J."/>
            <person name="Williams D."/>
            <person name="Bedell J.A."/>
            <person name="Mardis E.R."/>
            <person name="Clifton S.W."/>
            <person name="Chissoe S.L."/>
            <person name="Marra M.A."/>
            <person name="Raymond C."/>
            <person name="Haugen E."/>
            <person name="Gillett W."/>
            <person name="Zhou Y."/>
            <person name="James R."/>
            <person name="Phelps K."/>
            <person name="Iadanoto S."/>
            <person name="Bubb K."/>
            <person name="Simms E."/>
            <person name="Levy R."/>
            <person name="Clendenning J."/>
            <person name="Kaul R."/>
            <person name="Kent W.J."/>
            <person name="Furey T.S."/>
            <person name="Baertsch R.A."/>
            <person name="Brent M.R."/>
            <person name="Keibler E."/>
            <person name="Flicek P."/>
            <person name="Bork P."/>
            <person name="Suyama M."/>
            <person name="Bailey J.A."/>
            <person name="Portnoy M.E."/>
            <person name="Torrents D."/>
            <person name="Chinwalla A.T."/>
            <person name="Gish W.R."/>
            <person name="Eddy S.R."/>
            <person name="McPherson J.D."/>
            <person name="Olson M.V."/>
            <person name="Eichler E.E."/>
            <person name="Green E.D."/>
            <person name="Waterston R.H."/>
            <person name="Wilson R.K."/>
        </authorList>
    </citation>
    <scope>NUCLEOTIDE SEQUENCE [LARGE SCALE GENOMIC DNA]</scope>
</reference>
<reference key="5">
    <citation type="journal article" date="2003" name="Science">
        <title>Human chromosome 7: DNA sequence and biology.</title>
        <authorList>
            <person name="Scherer S.W."/>
            <person name="Cheung J."/>
            <person name="MacDonald J.R."/>
            <person name="Osborne L.R."/>
            <person name="Nakabayashi K."/>
            <person name="Herbrick J.-A."/>
            <person name="Carson A.R."/>
            <person name="Parker-Katiraee L."/>
            <person name="Skaug J."/>
            <person name="Khaja R."/>
            <person name="Zhang J."/>
            <person name="Hudek A.K."/>
            <person name="Li M."/>
            <person name="Haddad M."/>
            <person name="Duggan G.E."/>
            <person name="Fernandez B.A."/>
            <person name="Kanematsu E."/>
            <person name="Gentles S."/>
            <person name="Christopoulos C.C."/>
            <person name="Choufani S."/>
            <person name="Kwasnicka D."/>
            <person name="Zheng X.H."/>
            <person name="Lai Z."/>
            <person name="Nusskern D.R."/>
            <person name="Zhang Q."/>
            <person name="Gu Z."/>
            <person name="Lu F."/>
            <person name="Zeesman S."/>
            <person name="Nowaczyk M.J."/>
            <person name="Teshima I."/>
            <person name="Chitayat D."/>
            <person name="Shuman C."/>
            <person name="Weksberg R."/>
            <person name="Zackai E.H."/>
            <person name="Grebe T.A."/>
            <person name="Cox S.R."/>
            <person name="Kirkpatrick S.J."/>
            <person name="Rahman N."/>
            <person name="Friedman J.M."/>
            <person name="Heng H.H.Q."/>
            <person name="Pelicci P.G."/>
            <person name="Lo-Coco F."/>
            <person name="Belloni E."/>
            <person name="Shaffer L.G."/>
            <person name="Pober B."/>
            <person name="Morton C.C."/>
            <person name="Gusella J.F."/>
            <person name="Bruns G.A.P."/>
            <person name="Korf B.R."/>
            <person name="Quade B.J."/>
            <person name="Ligon A.H."/>
            <person name="Ferguson H."/>
            <person name="Higgins A.W."/>
            <person name="Leach N.T."/>
            <person name="Herrick S.R."/>
            <person name="Lemyre E."/>
            <person name="Farra C.G."/>
            <person name="Kim H.-G."/>
            <person name="Summers A.M."/>
            <person name="Gripp K.W."/>
            <person name="Roberts W."/>
            <person name="Szatmari P."/>
            <person name="Winsor E.J.T."/>
            <person name="Grzeschik K.-H."/>
            <person name="Teebi A."/>
            <person name="Minassian B.A."/>
            <person name="Kere J."/>
            <person name="Armengol L."/>
            <person name="Pujana M.A."/>
            <person name="Estivill X."/>
            <person name="Wilson M.D."/>
            <person name="Koop B.F."/>
            <person name="Tosi S."/>
            <person name="Moore G.E."/>
            <person name="Boright A.P."/>
            <person name="Zlotorynski E."/>
            <person name="Kerem B."/>
            <person name="Kroisel P.M."/>
            <person name="Petek E."/>
            <person name="Oscier D.G."/>
            <person name="Mould S.J."/>
            <person name="Doehner H."/>
            <person name="Doehner K."/>
            <person name="Rommens J.M."/>
            <person name="Vincent J.B."/>
            <person name="Venter J.C."/>
            <person name="Li P.W."/>
            <person name="Mural R.J."/>
            <person name="Adams M.D."/>
            <person name="Tsui L.-C."/>
        </authorList>
    </citation>
    <scope>NUCLEOTIDE SEQUENCE [LARGE SCALE GENOMIC DNA]</scope>
    <scope>VARIANT GLY-886</scope>
</reference>
<reference key="6">
    <citation type="submission" date="2005-07" db="EMBL/GenBank/DDBJ databases">
        <authorList>
            <person name="Mural R.J."/>
            <person name="Istrail S."/>
            <person name="Sutton G.G."/>
            <person name="Florea L."/>
            <person name="Halpern A.L."/>
            <person name="Mobarry C.M."/>
            <person name="Lippert R."/>
            <person name="Walenz B."/>
            <person name="Shatkay H."/>
            <person name="Dew I."/>
            <person name="Miller J.R."/>
            <person name="Flanigan M.J."/>
            <person name="Edwards N.J."/>
            <person name="Bolanos R."/>
            <person name="Fasulo D."/>
            <person name="Halldorsson B.V."/>
            <person name="Hannenhalli S."/>
            <person name="Turner R."/>
            <person name="Yooseph S."/>
            <person name="Lu F."/>
            <person name="Nusskern D.R."/>
            <person name="Shue B.C."/>
            <person name="Zheng X.H."/>
            <person name="Zhong F."/>
            <person name="Delcher A.L."/>
            <person name="Huson D.H."/>
            <person name="Kravitz S.A."/>
            <person name="Mouchard L."/>
            <person name="Reinert K."/>
            <person name="Remington K.A."/>
            <person name="Clark A.G."/>
            <person name="Waterman M.S."/>
            <person name="Eichler E.E."/>
            <person name="Adams M.D."/>
            <person name="Hunkapiller M.W."/>
            <person name="Myers E.W."/>
            <person name="Venter J.C."/>
        </authorList>
    </citation>
    <scope>NUCLEOTIDE SEQUENCE [LARGE SCALE GENOMIC DNA]</scope>
    <scope>VARIANT GLY-886</scope>
</reference>
<reference key="7">
    <citation type="journal article" date="2004" name="Genome Res.">
        <title>The status, quality, and expansion of the NIH full-length cDNA project: the Mammalian Gene Collection (MGC).</title>
        <authorList>
            <consortium name="The MGC Project Team"/>
        </authorList>
    </citation>
    <scope>NUCLEOTIDE SEQUENCE [LARGE SCALE MRNA] (ISOFORMS 1; 3 AND 4)</scope>
    <scope>VARIANTS GLY-886 AND PRO-938</scope>
    <source>
        <tissue>Heart</tissue>
        <tissue>Lung</tissue>
        <tissue>Skin</tissue>
    </source>
</reference>
<reference key="8">
    <citation type="journal article" date="2001" name="Genome Res.">
        <title>Towards a catalog of human genes and proteins: sequencing and analysis of 500 novel complete protein coding human cDNAs.</title>
        <authorList>
            <person name="Wiemann S."/>
            <person name="Weil B."/>
            <person name="Wellenreuther R."/>
            <person name="Gassenhuber J."/>
            <person name="Glassl S."/>
            <person name="Ansorge W."/>
            <person name="Boecher M."/>
            <person name="Bloecker H."/>
            <person name="Bauersachs S."/>
            <person name="Blum H."/>
            <person name="Lauber J."/>
            <person name="Duesterhoeft A."/>
            <person name="Beyer A."/>
            <person name="Koehrer K."/>
            <person name="Strack N."/>
            <person name="Mewes H.-W."/>
            <person name="Ottenwaelder B."/>
            <person name="Obermaier B."/>
            <person name="Tampe J."/>
            <person name="Heubner D."/>
            <person name="Wambutt R."/>
            <person name="Korn B."/>
            <person name="Klein M."/>
            <person name="Poustka A."/>
        </authorList>
    </citation>
    <scope>NUCLEOTIDE SEQUENCE [LARGE SCALE MRNA] OF 533-1075</scope>
    <scope>VARIANT GLY-886</scope>
    <source>
        <tissue>Testis</tissue>
    </source>
</reference>
<reference key="9">
    <citation type="journal article" date="2007" name="Genes Dev.">
        <title>A Rap GTPase interactor, RADIL, mediates migration of neural crest precursors.</title>
        <authorList>
            <person name="Smolen G.A."/>
            <person name="Schott B.J."/>
            <person name="Stewart R.A."/>
            <person name="Diederichs S."/>
            <person name="Muir B."/>
            <person name="Provencher H.L."/>
            <person name="Look A.T."/>
            <person name="Sgroi D.C."/>
            <person name="Peterson R.T."/>
            <person name="Haber D.A."/>
        </authorList>
    </citation>
    <scope>FUNCTION</scope>
    <scope>INTERACTION WITH RAP1A</scope>
</reference>
<reference key="10">
    <citation type="journal article" date="2012" name="J. Cell Biol.">
        <title>KIF14 negatively regulates Rap1a-Radil signaling during breast cancer progression.</title>
        <authorList>
            <person name="Ahmed S.M."/>
            <person name="Theriault B.L."/>
            <person name="Uppalapati M."/>
            <person name="Chiu C.W."/>
            <person name="Gallie B.L."/>
            <person name="Sidhu S.S."/>
            <person name="Angers S."/>
        </authorList>
    </citation>
    <scope>INTERACTION WITH KIF14</scope>
</reference>
<reference key="11">
    <citation type="journal article" date="2013" name="J. Proteome Res.">
        <title>Toward a comprehensive characterization of a human cancer cell phosphoproteome.</title>
        <authorList>
            <person name="Zhou H."/>
            <person name="Di Palma S."/>
            <person name="Preisinger C."/>
            <person name="Peng M."/>
            <person name="Polat A.N."/>
            <person name="Heck A.J."/>
            <person name="Mohammed S."/>
        </authorList>
    </citation>
    <scope>PHOSPHORYLATION [LARGE SCALE ANALYSIS] AT SER-206 AND SER-393</scope>
    <scope>IDENTIFICATION BY MASS SPECTROMETRY [LARGE SCALE ANALYSIS]</scope>
    <source>
        <tissue>Erythroleukemia</tissue>
    </source>
</reference>
<reference key="12">
    <citation type="submission" date="2004-03" db="PDB data bank">
        <title>Solution structure of RSGI RUH-007, a PDZ domain.</title>
        <authorList>
            <consortium name="RIKEN structural genomics initiative (RSGI)"/>
        </authorList>
    </citation>
    <scope>STRUCTURE BY NMR OF 973-1069</scope>
</reference>
<reference key="13">
    <citation type="journal article" date="2009" name="Sci. Signal.">
        <title>Quantitative phosphoproteomic analysis of T cell receptor signaling reveals system-wide modulation of protein-protein interactions.</title>
        <authorList>
            <person name="Mayya V."/>
            <person name="Lundgren D.H."/>
            <person name="Hwang S.-I."/>
            <person name="Rezaul K."/>
            <person name="Wu L."/>
            <person name="Eng J.K."/>
            <person name="Rodionov V."/>
            <person name="Han D.K."/>
        </authorList>
    </citation>
    <scope>VARIANT [LARGE SCALE ANALYSIS] ASN-239</scope>
    <scope>IDENTIFICATION BY MASS SPECTROMETRY [LARGE SCALE ANALYSIS]</scope>
    <source>
        <tissue>Leukemic T-cell</tissue>
    </source>
</reference>
<protein>
    <recommendedName>
        <fullName>Ras-associating and dilute domain-containing protein</fullName>
    </recommendedName>
</protein>
<gene>
    <name type="primary">RADIL</name>
    <name type="synonym">KIAA1849</name>
</gene>
<dbReference type="EMBL" id="AB058752">
    <property type="protein sequence ID" value="BAB47478.1"/>
    <property type="status" value="ALT_INIT"/>
    <property type="molecule type" value="mRNA"/>
</dbReference>
<dbReference type="EMBL" id="AK000997">
    <property type="protein sequence ID" value="BAA91459.1"/>
    <property type="molecule type" value="mRNA"/>
</dbReference>
<dbReference type="EMBL" id="AK001186">
    <property type="protein sequence ID" value="BAA91543.1"/>
    <property type="status" value="ALT_INIT"/>
    <property type="molecule type" value="mRNA"/>
</dbReference>
<dbReference type="EMBL" id="EF560723">
    <property type="protein sequence ID" value="ABQ59033.1"/>
    <property type="molecule type" value="mRNA"/>
</dbReference>
<dbReference type="EMBL" id="AC092610">
    <property type="protein sequence ID" value="AAS07559.1"/>
    <property type="status" value="ALT_SEQ"/>
    <property type="molecule type" value="Genomic_DNA"/>
</dbReference>
<dbReference type="EMBL" id="CH236953">
    <property type="protein sequence ID" value="EAL23966.1"/>
    <property type="molecule type" value="Genomic_DNA"/>
</dbReference>
<dbReference type="EMBL" id="CH471144">
    <property type="protein sequence ID" value="EAW87301.1"/>
    <property type="molecule type" value="Genomic_DNA"/>
</dbReference>
<dbReference type="EMBL" id="BC004919">
    <property type="protein sequence ID" value="AAH04919.2"/>
    <property type="molecule type" value="mRNA"/>
</dbReference>
<dbReference type="EMBL" id="BC117317">
    <property type="protein sequence ID" value="AAI17318.1"/>
    <property type="molecule type" value="mRNA"/>
</dbReference>
<dbReference type="EMBL" id="BC126311">
    <property type="protein sequence ID" value="AAI26312.1"/>
    <property type="molecule type" value="mRNA"/>
</dbReference>
<dbReference type="EMBL" id="BC143526">
    <property type="protein sequence ID" value="AAI43527.1"/>
    <property type="molecule type" value="mRNA"/>
</dbReference>
<dbReference type="EMBL" id="AL136731">
    <property type="protein sequence ID" value="CAB66665.2"/>
    <property type="molecule type" value="mRNA"/>
</dbReference>
<dbReference type="CCDS" id="CCDS43544.1">
    <molecule id="Q96JH8-4"/>
</dbReference>
<dbReference type="RefSeq" id="NP_060529.4">
    <molecule id="Q96JH8-4"/>
    <property type="nucleotide sequence ID" value="NM_018059.4"/>
</dbReference>
<dbReference type="PDB" id="1UM1">
    <property type="method" value="NMR"/>
    <property type="chains" value="A=973-1069"/>
</dbReference>
<dbReference type="PDB" id="3EC8">
    <property type="method" value="X-ray"/>
    <property type="resolution" value="2.60 A"/>
    <property type="chains" value="A=51-193"/>
</dbReference>
<dbReference type="PDBsum" id="1UM1"/>
<dbReference type="PDBsum" id="3EC8"/>
<dbReference type="SMR" id="Q96JH8"/>
<dbReference type="BioGRID" id="120823">
    <property type="interactions" value="45"/>
</dbReference>
<dbReference type="FunCoup" id="Q96JH8">
    <property type="interactions" value="464"/>
</dbReference>
<dbReference type="IntAct" id="Q96JH8">
    <property type="interactions" value="30"/>
</dbReference>
<dbReference type="MINT" id="Q96JH8"/>
<dbReference type="STRING" id="9606.ENSP00000382492"/>
<dbReference type="GlyGen" id="Q96JH8">
    <property type="glycosylation" value="1 site"/>
</dbReference>
<dbReference type="iPTMnet" id="Q96JH8"/>
<dbReference type="PhosphoSitePlus" id="Q96JH8"/>
<dbReference type="BioMuta" id="RADIL"/>
<dbReference type="DMDM" id="317373589"/>
<dbReference type="jPOST" id="Q96JH8"/>
<dbReference type="MassIVE" id="Q96JH8"/>
<dbReference type="PaxDb" id="9606-ENSP00000382492"/>
<dbReference type="PeptideAtlas" id="Q96JH8"/>
<dbReference type="ProteomicsDB" id="76964">
    <molecule id="Q96JH8-4"/>
</dbReference>
<dbReference type="ProteomicsDB" id="76965">
    <molecule id="Q96JH8-1"/>
</dbReference>
<dbReference type="ProteomicsDB" id="76966">
    <molecule id="Q96JH8-2"/>
</dbReference>
<dbReference type="ProteomicsDB" id="76967">
    <molecule id="Q96JH8-3"/>
</dbReference>
<dbReference type="Pumba" id="Q96JH8"/>
<dbReference type="Antibodypedia" id="43694">
    <property type="antibodies" value="147 antibodies from 18 providers"/>
</dbReference>
<dbReference type="DNASU" id="55698"/>
<dbReference type="Ensembl" id="ENST00000399583.4">
    <molecule id="Q96JH8-4"/>
    <property type="protein sequence ID" value="ENSP00000382492.3"/>
    <property type="gene ID" value="ENSG00000157927.17"/>
</dbReference>
<dbReference type="GeneID" id="55698"/>
<dbReference type="KEGG" id="hsa:55698"/>
<dbReference type="MANE-Select" id="ENST00000399583.4">
    <property type="protein sequence ID" value="ENSP00000382492.3"/>
    <property type="RefSeq nucleotide sequence ID" value="NM_018059.5"/>
    <property type="RefSeq protein sequence ID" value="NP_060529.4"/>
</dbReference>
<dbReference type="UCSC" id="uc003snj.2">
    <molecule id="Q96JH8-4"/>
    <property type="organism name" value="human"/>
</dbReference>
<dbReference type="AGR" id="HGNC:22226"/>
<dbReference type="CTD" id="55698"/>
<dbReference type="DisGeNET" id="55698"/>
<dbReference type="GeneCards" id="RADIL"/>
<dbReference type="HGNC" id="HGNC:22226">
    <property type="gene designation" value="RADIL"/>
</dbReference>
<dbReference type="HPA" id="ENSG00000157927">
    <property type="expression patterns" value="Tissue enhanced (brain)"/>
</dbReference>
<dbReference type="MIM" id="611491">
    <property type="type" value="gene"/>
</dbReference>
<dbReference type="neXtProt" id="NX_Q96JH8"/>
<dbReference type="OpenTargets" id="ENSG00000157927"/>
<dbReference type="PharmGKB" id="PA164725261"/>
<dbReference type="VEuPathDB" id="HostDB:ENSG00000157927"/>
<dbReference type="eggNOG" id="KOG0160">
    <property type="taxonomic scope" value="Eukaryota"/>
</dbReference>
<dbReference type="GeneTree" id="ENSGT00940000159293"/>
<dbReference type="HOGENOM" id="CLU_010386_0_0_1"/>
<dbReference type="InParanoid" id="Q96JH8"/>
<dbReference type="OMA" id="HCTIRRQ"/>
<dbReference type="OrthoDB" id="3908708at2759"/>
<dbReference type="PAN-GO" id="Q96JH8">
    <property type="GO annotations" value="4 GO annotations based on evolutionary models"/>
</dbReference>
<dbReference type="PhylomeDB" id="Q96JH8"/>
<dbReference type="TreeFam" id="TF350641"/>
<dbReference type="PathwayCommons" id="Q96JH8"/>
<dbReference type="SignaLink" id="Q96JH8"/>
<dbReference type="BioGRID-ORCS" id="55698">
    <property type="hits" value="17 hits in 1151 CRISPR screens"/>
</dbReference>
<dbReference type="ChiTaRS" id="RADIL">
    <property type="organism name" value="human"/>
</dbReference>
<dbReference type="EvolutionaryTrace" id="Q96JH8"/>
<dbReference type="GeneWiki" id="RADIL"/>
<dbReference type="GenomeRNAi" id="55698"/>
<dbReference type="Pharos" id="Q96JH8">
    <property type="development level" value="Tbio"/>
</dbReference>
<dbReference type="PRO" id="PR:Q96JH8"/>
<dbReference type="Proteomes" id="UP000005640">
    <property type="component" value="Chromosome 7"/>
</dbReference>
<dbReference type="RNAct" id="Q96JH8">
    <property type="molecule type" value="protein"/>
</dbReference>
<dbReference type="Bgee" id="ENSG00000157927">
    <property type="expression patterns" value="Expressed in oocyte and 150 other cell types or tissues"/>
</dbReference>
<dbReference type="ExpressionAtlas" id="Q96JH8">
    <property type="expression patterns" value="baseline and differential"/>
</dbReference>
<dbReference type="GO" id="GO:0005874">
    <property type="term" value="C:microtubule"/>
    <property type="evidence" value="ECO:0000314"/>
    <property type="project" value="MGI"/>
</dbReference>
<dbReference type="GO" id="GO:0032991">
    <property type="term" value="C:protein-containing complex"/>
    <property type="evidence" value="ECO:0000314"/>
    <property type="project" value="UniProtKB"/>
</dbReference>
<dbReference type="GO" id="GO:0051020">
    <property type="term" value="F:GTPase binding"/>
    <property type="evidence" value="ECO:0000318"/>
    <property type="project" value="GO_Central"/>
</dbReference>
<dbReference type="GO" id="GO:0001755">
    <property type="term" value="P:neural crest cell migration"/>
    <property type="evidence" value="ECO:0000318"/>
    <property type="project" value="GO_Central"/>
</dbReference>
<dbReference type="GO" id="GO:0007165">
    <property type="term" value="P:signal transduction"/>
    <property type="evidence" value="ECO:0007669"/>
    <property type="project" value="InterPro"/>
</dbReference>
<dbReference type="GO" id="GO:0034446">
    <property type="term" value="P:substrate adhesion-dependent cell spreading"/>
    <property type="evidence" value="ECO:0000314"/>
    <property type="project" value="MGI"/>
</dbReference>
<dbReference type="CDD" id="cd22733">
    <property type="entry name" value="FHA_RADIL"/>
    <property type="match status" value="1"/>
</dbReference>
<dbReference type="CDD" id="cd15472">
    <property type="entry name" value="Myo5p-like_CBD_Rasip1"/>
    <property type="match status" value="1"/>
</dbReference>
<dbReference type="CDD" id="cd06690">
    <property type="entry name" value="PDZ_Radil-like"/>
    <property type="match status" value="1"/>
</dbReference>
<dbReference type="CDD" id="cd17116">
    <property type="entry name" value="RA_Radil_like"/>
    <property type="match status" value="1"/>
</dbReference>
<dbReference type="FunFam" id="2.30.42.10:FF:000156">
    <property type="entry name" value="Ras-associating and dilute domain-containing protein"/>
    <property type="match status" value="1"/>
</dbReference>
<dbReference type="FunFam" id="3.10.20.90:FF:000265">
    <property type="entry name" value="Ras-associating and dilute domain-containing protein"/>
    <property type="match status" value="1"/>
</dbReference>
<dbReference type="FunFam" id="2.60.200.20:FF:000040">
    <property type="entry name" value="ras-associating and dilute domain-containing protein"/>
    <property type="match status" value="1"/>
</dbReference>
<dbReference type="Gene3D" id="2.30.42.10">
    <property type="match status" value="1"/>
</dbReference>
<dbReference type="Gene3D" id="2.60.200.20">
    <property type="match status" value="1"/>
</dbReference>
<dbReference type="Gene3D" id="3.10.20.90">
    <property type="entry name" value="Phosphatidylinositol 3-kinase Catalytic Subunit, Chain A, domain 1"/>
    <property type="match status" value="1"/>
</dbReference>
<dbReference type="InterPro" id="IPR037983">
    <property type="entry name" value="CBD_Rasip1/Radil"/>
</dbReference>
<dbReference type="InterPro" id="IPR002710">
    <property type="entry name" value="Dilute_dom"/>
</dbReference>
<dbReference type="InterPro" id="IPR000253">
    <property type="entry name" value="FHA_dom"/>
</dbReference>
<dbReference type="InterPro" id="IPR001478">
    <property type="entry name" value="PDZ"/>
</dbReference>
<dbReference type="InterPro" id="IPR036034">
    <property type="entry name" value="PDZ_sf"/>
</dbReference>
<dbReference type="InterPro" id="IPR000159">
    <property type="entry name" value="RA_dom"/>
</dbReference>
<dbReference type="InterPro" id="IPR008984">
    <property type="entry name" value="SMAD_FHA_dom_sf"/>
</dbReference>
<dbReference type="InterPro" id="IPR029071">
    <property type="entry name" value="Ubiquitin-like_domsf"/>
</dbReference>
<dbReference type="InterPro" id="IPR052072">
    <property type="entry name" value="Vascular_dev_regulator"/>
</dbReference>
<dbReference type="PANTHER" id="PTHR16027">
    <property type="entry name" value="DILUTE DOMAIN-CONTAINING PROTEIN YPR089W"/>
    <property type="match status" value="1"/>
</dbReference>
<dbReference type="PANTHER" id="PTHR16027:SF3">
    <property type="entry name" value="RAS-ASSOCIATING AND DILUTE DOMAIN-CONTAINING PROTEIN"/>
    <property type="match status" value="1"/>
</dbReference>
<dbReference type="Pfam" id="PF01843">
    <property type="entry name" value="DIL"/>
    <property type="match status" value="1"/>
</dbReference>
<dbReference type="Pfam" id="PF00498">
    <property type="entry name" value="FHA"/>
    <property type="match status" value="1"/>
</dbReference>
<dbReference type="Pfam" id="PF00595">
    <property type="entry name" value="PDZ"/>
    <property type="match status" value="1"/>
</dbReference>
<dbReference type="Pfam" id="PF00788">
    <property type="entry name" value="RA"/>
    <property type="match status" value="1"/>
</dbReference>
<dbReference type="SMART" id="SM01132">
    <property type="entry name" value="DIL"/>
    <property type="match status" value="1"/>
</dbReference>
<dbReference type="SMART" id="SM00228">
    <property type="entry name" value="PDZ"/>
    <property type="match status" value="1"/>
</dbReference>
<dbReference type="SMART" id="SM00314">
    <property type="entry name" value="RA"/>
    <property type="match status" value="1"/>
</dbReference>
<dbReference type="SUPFAM" id="SSF50156">
    <property type="entry name" value="PDZ domain-like"/>
    <property type="match status" value="1"/>
</dbReference>
<dbReference type="SUPFAM" id="SSF49879">
    <property type="entry name" value="SMAD/FHA domain"/>
    <property type="match status" value="1"/>
</dbReference>
<dbReference type="SUPFAM" id="SSF54236">
    <property type="entry name" value="Ubiquitin-like"/>
    <property type="match status" value="1"/>
</dbReference>
<dbReference type="PROSITE" id="PS51126">
    <property type="entry name" value="DILUTE"/>
    <property type="match status" value="1"/>
</dbReference>
<dbReference type="PROSITE" id="PS50106">
    <property type="entry name" value="PDZ"/>
    <property type="match status" value="1"/>
</dbReference>
<dbReference type="PROSITE" id="PS50200">
    <property type="entry name" value="RA"/>
    <property type="match status" value="1"/>
</dbReference>
<keyword id="KW-0002">3D-structure</keyword>
<keyword id="KW-0025">Alternative splicing</keyword>
<keyword id="KW-0130">Cell adhesion</keyword>
<keyword id="KW-0217">Developmental protein</keyword>
<keyword id="KW-0597">Phosphoprotein</keyword>
<keyword id="KW-1267">Proteomics identification</keyword>
<keyword id="KW-1185">Reference proteome</keyword>
<name>RADIL_HUMAN</name>
<accession>Q96JH8</accession>
<accession>A4D1Z5</accession>
<accession>A5YM49</accession>
<accession>B7ZL20</accession>
<accession>Q0VFZ9</accession>
<accession>Q75LH3</accession>
<accession>Q9BSP5</accession>
<accession>Q9H0M6</accession>
<accession>Q9NW43</accession>
<accession>Q9NWC4</accession>
<feature type="chain" id="PRO_0000050803" description="Ras-associating and dilute domain-containing protein">
    <location>
        <begin position="1"/>
        <end position="1075"/>
    </location>
</feature>
<feature type="domain" description="Ras-associating" evidence="3">
    <location>
        <begin position="61"/>
        <end position="164"/>
    </location>
</feature>
<feature type="domain" description="FHA">
    <location>
        <begin position="314"/>
        <end position="389"/>
    </location>
</feature>
<feature type="domain" description="Dilute" evidence="4">
    <location>
        <begin position="497"/>
        <end position="764"/>
    </location>
</feature>
<feature type="domain" description="PDZ" evidence="2">
    <location>
        <begin position="976"/>
        <end position="1061"/>
    </location>
</feature>
<feature type="region of interest" description="Disordered" evidence="5">
    <location>
        <begin position="183"/>
        <end position="237"/>
    </location>
</feature>
<feature type="region of interest" description="Disordered" evidence="5">
    <location>
        <begin position="872"/>
        <end position="967"/>
    </location>
</feature>
<feature type="compositionally biased region" description="Low complexity" evidence="5">
    <location>
        <begin position="225"/>
        <end position="234"/>
    </location>
</feature>
<feature type="compositionally biased region" description="Low complexity" evidence="5">
    <location>
        <begin position="950"/>
        <end position="967"/>
    </location>
</feature>
<feature type="modified residue" description="Phosphoserine" evidence="20">
    <location>
        <position position="206"/>
    </location>
</feature>
<feature type="modified residue" description="Phosphoserine" evidence="1">
    <location>
        <position position="216"/>
    </location>
</feature>
<feature type="modified residue" description="Phosphoserine" evidence="1">
    <location>
        <position position="219"/>
    </location>
</feature>
<feature type="modified residue" description="Phosphoserine" evidence="1">
    <location>
        <position position="221"/>
    </location>
</feature>
<feature type="modified residue" description="Phosphoserine" evidence="20">
    <location>
        <position position="393"/>
    </location>
</feature>
<feature type="modified residue" description="Phosphoserine" evidence="1">
    <location>
        <position position="890"/>
    </location>
</feature>
<feature type="splice variant" id="VSP_016097" description="In isoform 3." evidence="17">
    <location>
        <begin position="1"/>
        <end position="704"/>
    </location>
</feature>
<feature type="splice variant" id="VSP_016098" description="In isoform 2." evidence="16">
    <location>
        <begin position="1"/>
        <end position="495"/>
    </location>
</feature>
<feature type="splice variant" id="VSP_035179" description="In isoform 1." evidence="15 16 17">
    <original>DSLVYVLNRDRHTVGQRT</original>
    <variation>PGVCAQPGPAHGGPAD</variation>
    <location>
        <begin position="262"/>
        <end position="279"/>
    </location>
</feature>
<feature type="splice variant" id="VSP_016099" description="In isoform 3." evidence="17">
    <original>ATPRAQLIQMSWTALRAAFPALSPAQLHRLLTHYQLASAMGPMSTWEPGAQDSPEAFRS</original>
    <variation>MSPRVGPVTVARIPASCVHRAGDSGLNLLAPGFPHRWAGRPGEGGSFSCGHYGHPLSPA</variation>
    <location>
        <begin position="705"/>
        <end position="763"/>
    </location>
</feature>
<feature type="sequence variant" id="VAR_046192" description="In dbSNP:rs3763384." evidence="7 12 19">
    <original>D</original>
    <variation>N</variation>
    <location>
        <position position="239"/>
    </location>
</feature>
<feature type="sequence variant" id="VAR_046193" description="In dbSNP:rs2292498." evidence="7 9 12">
    <original>H</original>
    <variation>D</variation>
    <location>
        <position position="412"/>
    </location>
</feature>
<feature type="sequence variant" id="VAR_023769" description="In dbSNP:rs414035." evidence="6 7 8 9 10 12 14">
    <original>S</original>
    <variation>G</variation>
    <location>
        <position position="886"/>
    </location>
</feature>
<feature type="sequence variant" id="VAR_060193" description="In dbSNP:rs6966329." evidence="10">
    <original>L</original>
    <variation>P</variation>
    <location>
        <position position="938"/>
    </location>
</feature>
<feature type="sequence conflict" description="In Ref. 8; CAB66665." evidence="18" ref="8">
    <original>T</original>
    <variation>I</variation>
    <location>
        <position position="700"/>
    </location>
</feature>
<feature type="helix" evidence="22">
    <location>
        <begin position="52"/>
        <end position="60"/>
    </location>
</feature>
<feature type="strand" evidence="22">
    <location>
        <begin position="62"/>
        <end position="68"/>
    </location>
</feature>
<feature type="strand" evidence="22">
    <location>
        <begin position="79"/>
        <end position="84"/>
    </location>
</feature>
<feature type="helix" evidence="22">
    <location>
        <begin position="89"/>
        <end position="99"/>
    </location>
</feature>
<feature type="helix" evidence="22">
    <location>
        <begin position="104"/>
        <end position="109"/>
    </location>
</feature>
<feature type="strand" evidence="22">
    <location>
        <begin position="110"/>
        <end position="117"/>
    </location>
</feature>
<feature type="strand" evidence="22">
    <location>
        <begin position="130"/>
        <end position="133"/>
    </location>
</feature>
<feature type="helix" evidence="22">
    <location>
        <begin position="140"/>
        <end position="146"/>
    </location>
</feature>
<feature type="strand" evidence="22">
    <location>
        <begin position="154"/>
        <end position="161"/>
    </location>
</feature>
<feature type="helix" evidence="22">
    <location>
        <begin position="162"/>
        <end position="188"/>
    </location>
</feature>
<feature type="strand" evidence="21">
    <location>
        <begin position="974"/>
        <end position="980"/>
    </location>
</feature>
<feature type="strand" evidence="21">
    <location>
        <begin position="988"/>
        <end position="992"/>
    </location>
</feature>
<feature type="turn" evidence="21">
    <location>
        <begin position="993"/>
        <end position="995"/>
    </location>
</feature>
<feature type="strand" evidence="21">
    <location>
        <begin position="1001"/>
        <end position="1008"/>
    </location>
</feature>
<feature type="helix" evidence="21">
    <location>
        <begin position="1013"/>
        <end position="1017"/>
    </location>
</feature>
<feature type="strand" evidence="21">
    <location>
        <begin position="1025"/>
        <end position="1031"/>
    </location>
</feature>
<feature type="helix" evidence="21">
    <location>
        <begin position="1039"/>
        <end position="1047"/>
    </location>
</feature>
<feature type="strand" evidence="21">
    <location>
        <begin position="1051"/>
        <end position="1058"/>
    </location>
</feature>
<feature type="helix" evidence="21">
    <location>
        <begin position="1062"/>
        <end position="1068"/>
    </location>
</feature>
<proteinExistence type="evidence at protein level"/>